<feature type="chain" id="PRO_0000457472" description="Nitrosuccinate lyase">
    <location>
        <begin position="1"/>
        <end position="474"/>
    </location>
</feature>
<feature type="active site" description="Proton acceptor" evidence="1">
    <location>
        <position position="295"/>
    </location>
</feature>
<feature type="active site" description="Proton donor" evidence="1">
    <location>
        <position position="334"/>
    </location>
</feature>
<feature type="binding site" evidence="1">
    <location>
        <position position="301"/>
    </location>
    <ligand>
        <name>fumarate</name>
        <dbReference type="ChEBI" id="CHEBI:29806"/>
    </ligand>
</feature>
<feature type="binding site" evidence="1">
    <location>
        <position position="303"/>
    </location>
    <ligand>
        <name>fumarate</name>
        <dbReference type="ChEBI" id="CHEBI:29806"/>
    </ligand>
</feature>
<keyword id="KW-0456">Lyase</keyword>
<keyword id="KW-1185">Reference proteome</keyword>
<gene>
    <name evidence="4" type="ORF">BN159_4421</name>
</gene>
<proteinExistence type="evidence at protein level"/>
<protein>
    <recommendedName>
        <fullName evidence="3">Nitrosuccinate lyase</fullName>
        <ecNumber evidence="2">4.3.99.5</ecNumber>
    </recommendedName>
</protein>
<name>CREDH_STRDJ</name>
<comment type="function">
    <text evidence="2">Involved in the biosynthesis of desferrioxamine derivatives which have iron-binding properties and may act as siderophores (PubMed:30120394). Catalyzes the formation of nitrous acid from nitrosuccinic acid (2-nitrobutanedioate) by elimination of its nitro group (PubMed:30120394).</text>
</comment>
<comment type="catalytic activity">
    <reaction evidence="2">
        <text>2-nitrobutanedioate = fumarate + nitrite + H(+)</text>
        <dbReference type="Rhea" id="RHEA:69044"/>
        <dbReference type="ChEBI" id="CHEBI:15378"/>
        <dbReference type="ChEBI" id="CHEBI:16301"/>
        <dbReference type="ChEBI" id="CHEBI:29806"/>
        <dbReference type="ChEBI" id="CHEBI:180682"/>
        <dbReference type="EC" id="4.3.99.5"/>
    </reaction>
</comment>
<comment type="similarity">
    <text evidence="3">Belongs to the class-II fumarase/aspartase family.</text>
</comment>
<dbReference type="EC" id="4.3.99.5" evidence="2"/>
<dbReference type="EMBL" id="HE971709">
    <property type="protein sequence ID" value="CCK28800.1"/>
    <property type="molecule type" value="Genomic_DNA"/>
</dbReference>
<dbReference type="RefSeq" id="WP_015659148.1">
    <property type="nucleotide sequence ID" value="NC_020504.1"/>
</dbReference>
<dbReference type="SMR" id="K4R6W4"/>
<dbReference type="STRING" id="1214101.BN159_4421"/>
<dbReference type="KEGG" id="sdv:BN159_4421"/>
<dbReference type="PATRIC" id="fig|1214101.3.peg.4474"/>
<dbReference type="eggNOG" id="COG0015">
    <property type="taxonomic scope" value="Bacteria"/>
</dbReference>
<dbReference type="HOGENOM" id="CLU_030949_3_3_11"/>
<dbReference type="OrthoDB" id="9768878at2"/>
<dbReference type="Proteomes" id="UP000008043">
    <property type="component" value="Chromosome"/>
</dbReference>
<dbReference type="GO" id="GO:0016829">
    <property type="term" value="F:lyase activity"/>
    <property type="evidence" value="ECO:0007669"/>
    <property type="project" value="UniProtKB-KW"/>
</dbReference>
<dbReference type="CDD" id="cd01597">
    <property type="entry name" value="pCLME"/>
    <property type="match status" value="1"/>
</dbReference>
<dbReference type="Gene3D" id="1.10.40.30">
    <property type="entry name" value="Fumarase/aspartase (C-terminal domain)"/>
    <property type="match status" value="1"/>
</dbReference>
<dbReference type="Gene3D" id="1.20.200.10">
    <property type="entry name" value="Fumarase/aspartase (Central domain)"/>
    <property type="match status" value="1"/>
</dbReference>
<dbReference type="Gene3D" id="1.10.275.10">
    <property type="entry name" value="Fumarase/aspartase (N-terminal domain)"/>
    <property type="match status" value="1"/>
</dbReference>
<dbReference type="InterPro" id="IPR019468">
    <property type="entry name" value="AdenyloSucc_lyase_C"/>
</dbReference>
<dbReference type="InterPro" id="IPR024083">
    <property type="entry name" value="Fumarase/histidase_N"/>
</dbReference>
<dbReference type="InterPro" id="IPR000362">
    <property type="entry name" value="Fumarate_lyase_fam"/>
</dbReference>
<dbReference type="InterPro" id="IPR022761">
    <property type="entry name" value="Fumarate_lyase_N"/>
</dbReference>
<dbReference type="InterPro" id="IPR008948">
    <property type="entry name" value="L-Aspartase-like"/>
</dbReference>
<dbReference type="PANTHER" id="PTHR43172">
    <property type="entry name" value="ADENYLOSUCCINATE LYASE"/>
    <property type="match status" value="1"/>
</dbReference>
<dbReference type="PANTHER" id="PTHR43172:SF2">
    <property type="entry name" value="ADENYLOSUCCINATE LYASE C-TERMINAL DOMAIN-CONTAINING PROTEIN"/>
    <property type="match status" value="1"/>
</dbReference>
<dbReference type="Pfam" id="PF10397">
    <property type="entry name" value="ADSL_C"/>
    <property type="match status" value="1"/>
</dbReference>
<dbReference type="Pfam" id="PF00206">
    <property type="entry name" value="Lyase_1"/>
    <property type="match status" value="1"/>
</dbReference>
<dbReference type="PRINTS" id="PR00149">
    <property type="entry name" value="FUMRATELYASE"/>
</dbReference>
<dbReference type="SMART" id="SM00998">
    <property type="entry name" value="ADSL_C"/>
    <property type="match status" value="1"/>
</dbReference>
<dbReference type="SUPFAM" id="SSF48557">
    <property type="entry name" value="L-aspartase-like"/>
    <property type="match status" value="1"/>
</dbReference>
<evidence type="ECO:0000250" key="1">
    <source>
        <dbReference type="UniProtKB" id="A0A0K2JL82"/>
    </source>
</evidence>
<evidence type="ECO:0000269" key="2">
    <source>
    </source>
</evidence>
<evidence type="ECO:0000305" key="3"/>
<evidence type="ECO:0000312" key="4">
    <source>
        <dbReference type="EMBL" id="CCK28800.1"/>
    </source>
</evidence>
<reference key="1">
    <citation type="journal article" date="2012" name="J. Bacteriol.">
        <title>Genome sequence of the bacterium Streptomyces davawensis JCM 4913 and heterologous production of the unique antibiotic roseoflavin.</title>
        <authorList>
            <person name="Jankowitsch F."/>
            <person name="Schwarz J."/>
            <person name="Ruckert C."/>
            <person name="Gust B."/>
            <person name="Szczepanowski R."/>
            <person name="Blom J."/>
            <person name="Pelzer S."/>
            <person name="Kalinowski J."/>
            <person name="Mack M."/>
        </authorList>
    </citation>
    <scope>NUCLEOTIDE SEQUENCE [LARGE SCALE GENOMIC DNA]</scope>
    <source>
        <strain>DSM 101723 / JCM 4913 / KCC S-0913 / 768</strain>
    </source>
</reference>
<reference key="2">
    <citation type="journal article" date="2018" name="J. Antibiot.">
        <title>Novel desferrioxamine derivatives synthesized using the secondary metabolism-specific nitrous acid biosynthetic pathway in Streptomyces davawensis.</title>
        <authorList>
            <person name="Hagihara R."/>
            <person name="Katsuyama Y."/>
            <person name="Sugai Y."/>
            <person name="Onaka H."/>
            <person name="Ohnishi Y."/>
        </authorList>
    </citation>
    <scope>FUNCTION</scope>
    <scope>CATALYTIC ACTIVITY</scope>
    <source>
        <strain>DSM 101723 / JCM 4913 / KCC S-0913 / 768</strain>
    </source>
</reference>
<organism>
    <name type="scientific">Streptomyces davaonensis (strain DSM 101723 / JCM 4913 / KCC S-0913 / 768)</name>
    <dbReference type="NCBI Taxonomy" id="1214101"/>
    <lineage>
        <taxon>Bacteria</taxon>
        <taxon>Bacillati</taxon>
        <taxon>Actinomycetota</taxon>
        <taxon>Actinomycetes</taxon>
        <taxon>Kitasatosporales</taxon>
        <taxon>Streptomycetaceae</taxon>
        <taxon>Streptomyces</taxon>
    </lineage>
</organism>
<sequence length="474" mass="49179">MTFQLSPELAAVVDSGLLSPVRAGTPVEAAVSDAAWLAAMVEAETALVRAQARLGTVPESAAAAIVEAARPERLDLVALARASRETANPVVGFVKALTAVVAAEDPAAAEYVHRGSTSQDILDTATMLVVRRAGVLIRADLDRCAAALERLARTHRATPMAGRTLTLHAVPTTFGLKAAGWLHLVTEARRRTAALAAALPVELGGAAGTLAGYLEHANNPGDDYADRLVEAYAHETGLAPATLPWHVLRTPIADTGAVCAFLAAALGKIAVDVQSLARTEVGEVTEPAVAGRGASSAMPHKRNPVLATLIRSAALQVPQHAAVLYGAMLAEDERSGGAWHAEWQPLRECLRLAGGAAHTAVELLTGLTVDADRMRANLDLTGGQIVSERVAAVLTPLLGKAQARALLTRASHEAADRGTSLAEVLSAAPEVTRHLTAAELEELLDPTRYLGAAPGLVDRAVGGPDRAVPHRSAA</sequence>
<accession>K4R6W4</accession>